<feature type="chain" id="PRO_1000073110" description="Carbamoyl phosphate synthase large chain">
    <location>
        <begin position="1"/>
        <end position="1062"/>
    </location>
</feature>
<feature type="domain" description="ATP-grasp 1" evidence="1">
    <location>
        <begin position="133"/>
        <end position="327"/>
    </location>
</feature>
<feature type="domain" description="ATP-grasp 2" evidence="1">
    <location>
        <begin position="671"/>
        <end position="861"/>
    </location>
</feature>
<feature type="domain" description="MGS-like" evidence="1">
    <location>
        <begin position="930"/>
        <end position="1062"/>
    </location>
</feature>
<feature type="region of interest" description="Carboxyphosphate synthetic domain" evidence="1">
    <location>
        <begin position="1"/>
        <end position="401"/>
    </location>
</feature>
<feature type="region of interest" description="Oligomerization domain" evidence="1">
    <location>
        <begin position="402"/>
        <end position="546"/>
    </location>
</feature>
<feature type="region of interest" description="Carbamoyl phosphate synthetic domain" evidence="1">
    <location>
        <begin position="547"/>
        <end position="929"/>
    </location>
</feature>
<feature type="region of interest" description="Allosteric domain" evidence="1">
    <location>
        <begin position="930"/>
        <end position="1062"/>
    </location>
</feature>
<feature type="binding site" evidence="1">
    <location>
        <position position="129"/>
    </location>
    <ligand>
        <name>ATP</name>
        <dbReference type="ChEBI" id="CHEBI:30616"/>
        <label>1</label>
    </ligand>
</feature>
<feature type="binding site" evidence="1">
    <location>
        <position position="169"/>
    </location>
    <ligand>
        <name>ATP</name>
        <dbReference type="ChEBI" id="CHEBI:30616"/>
        <label>1</label>
    </ligand>
</feature>
<feature type="binding site" evidence="1">
    <location>
        <position position="175"/>
    </location>
    <ligand>
        <name>ATP</name>
        <dbReference type="ChEBI" id="CHEBI:30616"/>
        <label>1</label>
    </ligand>
</feature>
<feature type="binding site" evidence="1">
    <location>
        <position position="176"/>
    </location>
    <ligand>
        <name>ATP</name>
        <dbReference type="ChEBI" id="CHEBI:30616"/>
        <label>1</label>
    </ligand>
</feature>
<feature type="binding site" evidence="1">
    <location>
        <position position="208"/>
    </location>
    <ligand>
        <name>ATP</name>
        <dbReference type="ChEBI" id="CHEBI:30616"/>
        <label>1</label>
    </ligand>
</feature>
<feature type="binding site" evidence="1">
    <location>
        <position position="210"/>
    </location>
    <ligand>
        <name>ATP</name>
        <dbReference type="ChEBI" id="CHEBI:30616"/>
        <label>1</label>
    </ligand>
</feature>
<feature type="binding site" evidence="1">
    <location>
        <position position="215"/>
    </location>
    <ligand>
        <name>ATP</name>
        <dbReference type="ChEBI" id="CHEBI:30616"/>
        <label>1</label>
    </ligand>
</feature>
<feature type="binding site" evidence="1">
    <location>
        <position position="241"/>
    </location>
    <ligand>
        <name>ATP</name>
        <dbReference type="ChEBI" id="CHEBI:30616"/>
        <label>1</label>
    </ligand>
</feature>
<feature type="binding site" evidence="1">
    <location>
        <position position="242"/>
    </location>
    <ligand>
        <name>ATP</name>
        <dbReference type="ChEBI" id="CHEBI:30616"/>
        <label>1</label>
    </ligand>
</feature>
<feature type="binding site" evidence="1">
    <location>
        <position position="243"/>
    </location>
    <ligand>
        <name>ATP</name>
        <dbReference type="ChEBI" id="CHEBI:30616"/>
        <label>1</label>
    </ligand>
</feature>
<feature type="binding site" evidence="1">
    <location>
        <position position="284"/>
    </location>
    <ligand>
        <name>ATP</name>
        <dbReference type="ChEBI" id="CHEBI:30616"/>
        <label>1</label>
    </ligand>
</feature>
<feature type="binding site" evidence="1">
    <location>
        <position position="284"/>
    </location>
    <ligand>
        <name>Mg(2+)</name>
        <dbReference type="ChEBI" id="CHEBI:18420"/>
        <label>1</label>
    </ligand>
</feature>
<feature type="binding site" evidence="1">
    <location>
        <position position="284"/>
    </location>
    <ligand>
        <name>Mn(2+)</name>
        <dbReference type="ChEBI" id="CHEBI:29035"/>
        <label>1</label>
    </ligand>
</feature>
<feature type="binding site" evidence="1">
    <location>
        <position position="298"/>
    </location>
    <ligand>
        <name>ATP</name>
        <dbReference type="ChEBI" id="CHEBI:30616"/>
        <label>1</label>
    </ligand>
</feature>
<feature type="binding site" evidence="1">
    <location>
        <position position="298"/>
    </location>
    <ligand>
        <name>Mg(2+)</name>
        <dbReference type="ChEBI" id="CHEBI:18420"/>
        <label>1</label>
    </ligand>
</feature>
<feature type="binding site" evidence="1">
    <location>
        <position position="298"/>
    </location>
    <ligand>
        <name>Mg(2+)</name>
        <dbReference type="ChEBI" id="CHEBI:18420"/>
        <label>2</label>
    </ligand>
</feature>
<feature type="binding site" evidence="1">
    <location>
        <position position="298"/>
    </location>
    <ligand>
        <name>Mn(2+)</name>
        <dbReference type="ChEBI" id="CHEBI:29035"/>
        <label>1</label>
    </ligand>
</feature>
<feature type="binding site" evidence="1">
    <location>
        <position position="298"/>
    </location>
    <ligand>
        <name>Mn(2+)</name>
        <dbReference type="ChEBI" id="CHEBI:29035"/>
        <label>2</label>
    </ligand>
</feature>
<feature type="binding site" evidence="1">
    <location>
        <position position="300"/>
    </location>
    <ligand>
        <name>Mg(2+)</name>
        <dbReference type="ChEBI" id="CHEBI:18420"/>
        <label>2</label>
    </ligand>
</feature>
<feature type="binding site" evidence="1">
    <location>
        <position position="300"/>
    </location>
    <ligand>
        <name>Mn(2+)</name>
        <dbReference type="ChEBI" id="CHEBI:29035"/>
        <label>2</label>
    </ligand>
</feature>
<feature type="binding site" evidence="1">
    <location>
        <position position="707"/>
    </location>
    <ligand>
        <name>ATP</name>
        <dbReference type="ChEBI" id="CHEBI:30616"/>
        <label>2</label>
    </ligand>
</feature>
<feature type="binding site" evidence="1">
    <location>
        <position position="746"/>
    </location>
    <ligand>
        <name>ATP</name>
        <dbReference type="ChEBI" id="CHEBI:30616"/>
        <label>2</label>
    </ligand>
</feature>
<feature type="binding site" evidence="1">
    <location>
        <position position="748"/>
    </location>
    <ligand>
        <name>ATP</name>
        <dbReference type="ChEBI" id="CHEBI:30616"/>
        <label>2</label>
    </ligand>
</feature>
<feature type="binding site" evidence="1">
    <location>
        <position position="752"/>
    </location>
    <ligand>
        <name>ATP</name>
        <dbReference type="ChEBI" id="CHEBI:30616"/>
        <label>2</label>
    </ligand>
</feature>
<feature type="binding site" evidence="1">
    <location>
        <position position="777"/>
    </location>
    <ligand>
        <name>ATP</name>
        <dbReference type="ChEBI" id="CHEBI:30616"/>
        <label>2</label>
    </ligand>
</feature>
<feature type="binding site" evidence="1">
    <location>
        <position position="778"/>
    </location>
    <ligand>
        <name>ATP</name>
        <dbReference type="ChEBI" id="CHEBI:30616"/>
        <label>2</label>
    </ligand>
</feature>
<feature type="binding site" evidence="1">
    <location>
        <position position="779"/>
    </location>
    <ligand>
        <name>ATP</name>
        <dbReference type="ChEBI" id="CHEBI:30616"/>
        <label>2</label>
    </ligand>
</feature>
<feature type="binding site" evidence="1">
    <location>
        <position position="780"/>
    </location>
    <ligand>
        <name>ATP</name>
        <dbReference type="ChEBI" id="CHEBI:30616"/>
        <label>2</label>
    </ligand>
</feature>
<feature type="binding site" evidence="1">
    <location>
        <position position="820"/>
    </location>
    <ligand>
        <name>ATP</name>
        <dbReference type="ChEBI" id="CHEBI:30616"/>
        <label>2</label>
    </ligand>
</feature>
<feature type="binding site" evidence="1">
    <location>
        <position position="820"/>
    </location>
    <ligand>
        <name>Mg(2+)</name>
        <dbReference type="ChEBI" id="CHEBI:18420"/>
        <label>3</label>
    </ligand>
</feature>
<feature type="binding site" evidence="1">
    <location>
        <position position="820"/>
    </location>
    <ligand>
        <name>Mn(2+)</name>
        <dbReference type="ChEBI" id="CHEBI:29035"/>
        <label>3</label>
    </ligand>
</feature>
<feature type="binding site" evidence="1">
    <location>
        <position position="832"/>
    </location>
    <ligand>
        <name>ATP</name>
        <dbReference type="ChEBI" id="CHEBI:30616"/>
        <label>2</label>
    </ligand>
</feature>
<feature type="binding site" evidence="1">
    <location>
        <position position="832"/>
    </location>
    <ligand>
        <name>Mg(2+)</name>
        <dbReference type="ChEBI" id="CHEBI:18420"/>
        <label>3</label>
    </ligand>
</feature>
<feature type="binding site" evidence="1">
    <location>
        <position position="832"/>
    </location>
    <ligand>
        <name>Mg(2+)</name>
        <dbReference type="ChEBI" id="CHEBI:18420"/>
        <label>4</label>
    </ligand>
</feature>
<feature type="binding site" evidence="1">
    <location>
        <position position="832"/>
    </location>
    <ligand>
        <name>Mn(2+)</name>
        <dbReference type="ChEBI" id="CHEBI:29035"/>
        <label>3</label>
    </ligand>
</feature>
<feature type="binding site" evidence="1">
    <location>
        <position position="832"/>
    </location>
    <ligand>
        <name>Mn(2+)</name>
        <dbReference type="ChEBI" id="CHEBI:29035"/>
        <label>4</label>
    </ligand>
</feature>
<feature type="binding site" evidence="1">
    <location>
        <position position="834"/>
    </location>
    <ligand>
        <name>Mg(2+)</name>
        <dbReference type="ChEBI" id="CHEBI:18420"/>
        <label>4</label>
    </ligand>
</feature>
<feature type="binding site" evidence="1">
    <location>
        <position position="834"/>
    </location>
    <ligand>
        <name>Mn(2+)</name>
        <dbReference type="ChEBI" id="CHEBI:29035"/>
        <label>4</label>
    </ligand>
</feature>
<comment type="function">
    <text evidence="1">Large subunit of the glutamine-dependent carbamoyl phosphate synthetase (CPSase). CPSase catalyzes the formation of carbamoyl phosphate from the ammonia moiety of glutamine, carbonate, and phosphate donated by ATP, constituting the first step of 2 biosynthetic pathways, one leading to arginine and/or urea and the other to pyrimidine nucleotides. The large subunit (synthetase) binds the substrates ammonia (free or transferred from glutamine from the small subunit), hydrogencarbonate and ATP and carries out an ATP-coupled ligase reaction, activating hydrogencarbonate by forming carboxy phosphate which reacts with ammonia to form carbamoyl phosphate.</text>
</comment>
<comment type="catalytic activity">
    <reaction evidence="1">
        <text>hydrogencarbonate + L-glutamine + 2 ATP + H2O = carbamoyl phosphate + L-glutamate + 2 ADP + phosphate + 2 H(+)</text>
        <dbReference type="Rhea" id="RHEA:18633"/>
        <dbReference type="ChEBI" id="CHEBI:15377"/>
        <dbReference type="ChEBI" id="CHEBI:15378"/>
        <dbReference type="ChEBI" id="CHEBI:17544"/>
        <dbReference type="ChEBI" id="CHEBI:29985"/>
        <dbReference type="ChEBI" id="CHEBI:30616"/>
        <dbReference type="ChEBI" id="CHEBI:43474"/>
        <dbReference type="ChEBI" id="CHEBI:58228"/>
        <dbReference type="ChEBI" id="CHEBI:58359"/>
        <dbReference type="ChEBI" id="CHEBI:456216"/>
        <dbReference type="EC" id="6.3.5.5"/>
    </reaction>
</comment>
<comment type="catalytic activity">
    <molecule>Carbamoyl phosphate synthase large chain</molecule>
    <reaction evidence="1">
        <text>hydrogencarbonate + NH4(+) + 2 ATP = carbamoyl phosphate + 2 ADP + phosphate + 2 H(+)</text>
        <dbReference type="Rhea" id="RHEA:18029"/>
        <dbReference type="ChEBI" id="CHEBI:15378"/>
        <dbReference type="ChEBI" id="CHEBI:17544"/>
        <dbReference type="ChEBI" id="CHEBI:28938"/>
        <dbReference type="ChEBI" id="CHEBI:30616"/>
        <dbReference type="ChEBI" id="CHEBI:43474"/>
        <dbReference type="ChEBI" id="CHEBI:58228"/>
        <dbReference type="ChEBI" id="CHEBI:456216"/>
        <dbReference type="EC" id="6.3.4.16"/>
    </reaction>
</comment>
<comment type="cofactor">
    <cofactor evidence="1">
        <name>Mg(2+)</name>
        <dbReference type="ChEBI" id="CHEBI:18420"/>
    </cofactor>
    <cofactor evidence="1">
        <name>Mn(2+)</name>
        <dbReference type="ChEBI" id="CHEBI:29035"/>
    </cofactor>
    <text evidence="1">Binds 4 Mg(2+) or Mn(2+) ions per subunit.</text>
</comment>
<comment type="pathway">
    <text evidence="1">Amino-acid biosynthesis; L-arginine biosynthesis; carbamoyl phosphate from bicarbonate: step 1/1.</text>
</comment>
<comment type="pathway">
    <text evidence="1">Pyrimidine metabolism; UMP biosynthesis via de novo pathway; (S)-dihydroorotate from bicarbonate: step 1/3.</text>
</comment>
<comment type="subunit">
    <text evidence="1">Composed of two chains; the small (or glutamine) chain promotes the hydrolysis of glutamine to ammonia, which is used by the large (or ammonia) chain to synthesize carbamoyl phosphate. Tetramer of heterodimers (alpha,beta)4.</text>
</comment>
<comment type="domain">
    <text evidence="1">The large subunit is composed of 2 ATP-grasp domains that are involved in binding the 2 ATP molecules needed for carbamoyl phosphate synthesis. The N-terminal ATP-grasp domain (referred to as the carboxyphosphate synthetic component) catalyzes the ATP-dependent phosphorylation of hydrogencarbonate to carboxyphosphate and the subsequent nucleophilic attack by ammonia to form a carbamate intermediate. The C-terminal ATP-grasp domain (referred to as the carbamoyl phosphate synthetic component) then catalyzes the phosphorylation of carbamate with the second ATP to form the end product carbamoyl phosphate. The reactive and unstable enzyme intermediates are sequentially channeled from one active site to the next through the interior of the protein over a distance of at least 96 A.</text>
</comment>
<comment type="similarity">
    <text evidence="1">Belongs to the CarB family.</text>
</comment>
<accession>A8YVZ3</accession>
<reference key="1">
    <citation type="journal article" date="2008" name="J. Bacteriol.">
        <title>Genome sequence of Lactobacillus helveticus: an organism distinguished by selective gene loss and IS element expansion.</title>
        <authorList>
            <person name="Callanan M."/>
            <person name="Kaleta P."/>
            <person name="O'Callaghan J."/>
            <person name="O'Sullivan O."/>
            <person name="Jordan K."/>
            <person name="McAuliffe O."/>
            <person name="Sangrador-Vegas A."/>
            <person name="Slattery L."/>
            <person name="Fitzgerald G.F."/>
            <person name="Beresford T."/>
            <person name="Ross R.P."/>
        </authorList>
    </citation>
    <scope>NUCLEOTIDE SEQUENCE [LARGE SCALE GENOMIC DNA]</scope>
    <source>
        <strain>DPC 4571</strain>
    </source>
</reference>
<sequence length="1062" mass="117327">MPKRTDIHKIMVIGSGPIIIGQAAEFDYSGTQACLALRDEGYEVVLVNSNPATIMTDTTIADKVYIEPLTVDSVSRIIRQEYPDAILPTLGGQVGLNMALALAKTGILDELHIELLGTKLASIEQAEDREKFKELCQKLGEPVPPSKTVKTVEDALAFGDEIGYPIIVRPAFTMGGTGGGICHNHDELAEIAKNGLELSPVTECLIEKSIAGYKEIEFEVMRDSSDNAMIVCCMENFDPVGIHTGDSIVFSPSQTLSDKEYQMLRDCSLKLIRALKIEGGCNVQLALDPNSLDYDVIEVNPRVSRSSALASKATGYPIAKMAAKIAIGMTLDEIKNPVTGTTYAEFEPALDYVVCKIPRFPFDKFPKADRVLGTQMKATGEVMAIGRTAEEAMQKAVQSLEIDEKDLYSAKAHKASDDEIEQKLVRPQDDRLFYLAEAFRRGYSLEDVHELTKINFYFLDVVKHMVEMEKEIEANPDDLDVLRLAKKYGFSDQTIAKLWHEYPDQVRDLRKANGIVPVYKMVDTCAAEFESTTPYFYSTYDGENESRKSGKKSVIVIGSGPIRIGQGVEFDYATVHSVKALQKMGYEAIVINSNPETVSTDFSVSDKLYFEPLTLEDVLNVCDLEQPEGVIVQFGGQTSINLAAGLERHGVKILGTTVKDLDRAEDREEFDQIIKSLHLHQPQGLTATTHEGVMKAADQLGYPVLVRPSYVLGGKAMEIVYSKDELEEYLHDHADIAEDHPILVDDYLDGRECDVDAISDGKTVLLPGIMEHIEHAGVHSGDSMAVYPPQTFSDEVEEKITDVTKKLALALNCKGIMNIQFIVRDGDVYVIEVNPRASRTVPFLSKITGIEMAQVATRVIMGESLEQQGYADGLAPEPEMISVKAPVFSFSKLADVDSYLGPEMKSTGEVMGSDHTFAKALYKAFAGAKMQLPENGNVLLTIEDRDKEKILPIAKRFARIGYRIFATKGTANFLKKNDLHVELVTKVHEDEQADDNILNELRDGKIDLVINTMGHDIEKNSDGFIIRQMAIQQNVPLLTALDTADALLKSLENRSFATDALK</sequence>
<proteinExistence type="inferred from homology"/>
<gene>
    <name evidence="1" type="primary">carB</name>
    <name type="ordered locus">lhv_1443</name>
</gene>
<keyword id="KW-0028">Amino-acid biosynthesis</keyword>
<keyword id="KW-0055">Arginine biosynthesis</keyword>
<keyword id="KW-0067">ATP-binding</keyword>
<keyword id="KW-0436">Ligase</keyword>
<keyword id="KW-0460">Magnesium</keyword>
<keyword id="KW-0464">Manganese</keyword>
<keyword id="KW-0479">Metal-binding</keyword>
<keyword id="KW-0547">Nucleotide-binding</keyword>
<keyword id="KW-0665">Pyrimidine biosynthesis</keyword>
<keyword id="KW-0677">Repeat</keyword>
<dbReference type="EC" id="6.3.4.16" evidence="1"/>
<dbReference type="EC" id="6.3.5.5" evidence="1"/>
<dbReference type="EMBL" id="CP000517">
    <property type="protein sequence ID" value="ABX27902.1"/>
    <property type="molecule type" value="Genomic_DNA"/>
</dbReference>
<dbReference type="RefSeq" id="WP_012212413.1">
    <property type="nucleotide sequence ID" value="NC_010080.1"/>
</dbReference>
<dbReference type="SMR" id="A8YVZ3"/>
<dbReference type="KEGG" id="lhe:lhv_1443"/>
<dbReference type="eggNOG" id="COG0458">
    <property type="taxonomic scope" value="Bacteria"/>
</dbReference>
<dbReference type="HOGENOM" id="CLU_000513_1_0_9"/>
<dbReference type="UniPathway" id="UPA00068">
    <property type="reaction ID" value="UER00171"/>
</dbReference>
<dbReference type="UniPathway" id="UPA00070">
    <property type="reaction ID" value="UER00115"/>
</dbReference>
<dbReference type="Proteomes" id="UP000000790">
    <property type="component" value="Chromosome"/>
</dbReference>
<dbReference type="GO" id="GO:0005737">
    <property type="term" value="C:cytoplasm"/>
    <property type="evidence" value="ECO:0007669"/>
    <property type="project" value="TreeGrafter"/>
</dbReference>
<dbReference type="GO" id="GO:0005524">
    <property type="term" value="F:ATP binding"/>
    <property type="evidence" value="ECO:0007669"/>
    <property type="project" value="UniProtKB-UniRule"/>
</dbReference>
<dbReference type="GO" id="GO:0004087">
    <property type="term" value="F:carbamoyl-phosphate synthase (ammonia) activity"/>
    <property type="evidence" value="ECO:0007669"/>
    <property type="project" value="RHEA"/>
</dbReference>
<dbReference type="GO" id="GO:0004088">
    <property type="term" value="F:carbamoyl-phosphate synthase (glutamine-hydrolyzing) activity"/>
    <property type="evidence" value="ECO:0007669"/>
    <property type="project" value="UniProtKB-UniRule"/>
</dbReference>
<dbReference type="GO" id="GO:0046872">
    <property type="term" value="F:metal ion binding"/>
    <property type="evidence" value="ECO:0007669"/>
    <property type="project" value="UniProtKB-KW"/>
</dbReference>
<dbReference type="GO" id="GO:0044205">
    <property type="term" value="P:'de novo' UMP biosynthetic process"/>
    <property type="evidence" value="ECO:0007669"/>
    <property type="project" value="UniProtKB-UniRule"/>
</dbReference>
<dbReference type="GO" id="GO:0006541">
    <property type="term" value="P:glutamine metabolic process"/>
    <property type="evidence" value="ECO:0007669"/>
    <property type="project" value="TreeGrafter"/>
</dbReference>
<dbReference type="GO" id="GO:0006526">
    <property type="term" value="P:L-arginine biosynthetic process"/>
    <property type="evidence" value="ECO:0007669"/>
    <property type="project" value="UniProtKB-UniRule"/>
</dbReference>
<dbReference type="CDD" id="cd01424">
    <property type="entry name" value="MGS_CPS_II"/>
    <property type="match status" value="1"/>
</dbReference>
<dbReference type="FunFam" id="1.10.1030.10:FF:000002">
    <property type="entry name" value="Carbamoyl-phosphate synthase large chain"/>
    <property type="match status" value="1"/>
</dbReference>
<dbReference type="FunFam" id="3.30.1490.20:FF:000001">
    <property type="entry name" value="Carbamoyl-phosphate synthase large chain"/>
    <property type="match status" value="1"/>
</dbReference>
<dbReference type="FunFam" id="3.30.470.20:FF:000001">
    <property type="entry name" value="Carbamoyl-phosphate synthase large chain"/>
    <property type="match status" value="1"/>
</dbReference>
<dbReference type="FunFam" id="3.30.470.20:FF:000026">
    <property type="entry name" value="Carbamoyl-phosphate synthase large chain"/>
    <property type="match status" value="1"/>
</dbReference>
<dbReference type="FunFam" id="3.40.50.20:FF:000001">
    <property type="entry name" value="Carbamoyl-phosphate synthase large chain"/>
    <property type="match status" value="1"/>
</dbReference>
<dbReference type="FunFam" id="3.40.50.20:FF:000002">
    <property type="entry name" value="Carbamoyl-phosphate synthase large chain"/>
    <property type="match status" value="1"/>
</dbReference>
<dbReference type="Gene3D" id="3.40.50.20">
    <property type="match status" value="2"/>
</dbReference>
<dbReference type="Gene3D" id="3.30.470.20">
    <property type="entry name" value="ATP-grasp fold, B domain"/>
    <property type="match status" value="2"/>
</dbReference>
<dbReference type="Gene3D" id="1.10.1030.10">
    <property type="entry name" value="Carbamoyl-phosphate synthetase, large subunit oligomerisation domain"/>
    <property type="match status" value="1"/>
</dbReference>
<dbReference type="Gene3D" id="3.40.50.1380">
    <property type="entry name" value="Methylglyoxal synthase-like domain"/>
    <property type="match status" value="1"/>
</dbReference>
<dbReference type="HAMAP" id="MF_01210_A">
    <property type="entry name" value="CPSase_L_chain_A"/>
    <property type="match status" value="1"/>
</dbReference>
<dbReference type="HAMAP" id="MF_01210_B">
    <property type="entry name" value="CPSase_L_chain_B"/>
    <property type="match status" value="1"/>
</dbReference>
<dbReference type="InterPro" id="IPR011761">
    <property type="entry name" value="ATP-grasp"/>
</dbReference>
<dbReference type="InterPro" id="IPR006275">
    <property type="entry name" value="CarbamoylP_synth_lsu"/>
</dbReference>
<dbReference type="InterPro" id="IPR005480">
    <property type="entry name" value="CarbamoylP_synth_lsu_oligo"/>
</dbReference>
<dbReference type="InterPro" id="IPR036897">
    <property type="entry name" value="CarbamoylP_synth_lsu_oligo_sf"/>
</dbReference>
<dbReference type="InterPro" id="IPR005479">
    <property type="entry name" value="CbamoylP_synth_lsu-like_ATP-bd"/>
</dbReference>
<dbReference type="InterPro" id="IPR005483">
    <property type="entry name" value="CbamoylP_synth_lsu_CPSase_dom"/>
</dbReference>
<dbReference type="InterPro" id="IPR011607">
    <property type="entry name" value="MGS-like_dom"/>
</dbReference>
<dbReference type="InterPro" id="IPR036914">
    <property type="entry name" value="MGS-like_dom_sf"/>
</dbReference>
<dbReference type="InterPro" id="IPR033937">
    <property type="entry name" value="MGS_CPS_CarB"/>
</dbReference>
<dbReference type="InterPro" id="IPR016185">
    <property type="entry name" value="PreATP-grasp_dom_sf"/>
</dbReference>
<dbReference type="NCBIfam" id="TIGR01369">
    <property type="entry name" value="CPSaseII_lrg"/>
    <property type="match status" value="1"/>
</dbReference>
<dbReference type="NCBIfam" id="NF003671">
    <property type="entry name" value="PRK05294.1"/>
    <property type="match status" value="1"/>
</dbReference>
<dbReference type="NCBIfam" id="NF009455">
    <property type="entry name" value="PRK12815.1"/>
    <property type="match status" value="1"/>
</dbReference>
<dbReference type="PANTHER" id="PTHR11405:SF53">
    <property type="entry name" value="CARBAMOYL-PHOSPHATE SYNTHASE [AMMONIA], MITOCHONDRIAL"/>
    <property type="match status" value="1"/>
</dbReference>
<dbReference type="PANTHER" id="PTHR11405">
    <property type="entry name" value="CARBAMOYLTRANSFERASE FAMILY MEMBER"/>
    <property type="match status" value="1"/>
</dbReference>
<dbReference type="Pfam" id="PF02786">
    <property type="entry name" value="CPSase_L_D2"/>
    <property type="match status" value="2"/>
</dbReference>
<dbReference type="Pfam" id="PF02787">
    <property type="entry name" value="CPSase_L_D3"/>
    <property type="match status" value="1"/>
</dbReference>
<dbReference type="Pfam" id="PF02142">
    <property type="entry name" value="MGS"/>
    <property type="match status" value="1"/>
</dbReference>
<dbReference type="PRINTS" id="PR00098">
    <property type="entry name" value="CPSASE"/>
</dbReference>
<dbReference type="SMART" id="SM01096">
    <property type="entry name" value="CPSase_L_D3"/>
    <property type="match status" value="1"/>
</dbReference>
<dbReference type="SMART" id="SM01209">
    <property type="entry name" value="GARS_A"/>
    <property type="match status" value="1"/>
</dbReference>
<dbReference type="SMART" id="SM00851">
    <property type="entry name" value="MGS"/>
    <property type="match status" value="1"/>
</dbReference>
<dbReference type="SUPFAM" id="SSF48108">
    <property type="entry name" value="Carbamoyl phosphate synthetase, large subunit connection domain"/>
    <property type="match status" value="1"/>
</dbReference>
<dbReference type="SUPFAM" id="SSF56059">
    <property type="entry name" value="Glutathione synthetase ATP-binding domain-like"/>
    <property type="match status" value="2"/>
</dbReference>
<dbReference type="SUPFAM" id="SSF52335">
    <property type="entry name" value="Methylglyoxal synthase-like"/>
    <property type="match status" value="1"/>
</dbReference>
<dbReference type="SUPFAM" id="SSF52440">
    <property type="entry name" value="PreATP-grasp domain"/>
    <property type="match status" value="2"/>
</dbReference>
<dbReference type="PROSITE" id="PS50975">
    <property type="entry name" value="ATP_GRASP"/>
    <property type="match status" value="2"/>
</dbReference>
<dbReference type="PROSITE" id="PS00866">
    <property type="entry name" value="CPSASE_1"/>
    <property type="match status" value="2"/>
</dbReference>
<dbReference type="PROSITE" id="PS00867">
    <property type="entry name" value="CPSASE_2"/>
    <property type="match status" value="2"/>
</dbReference>
<dbReference type="PROSITE" id="PS51855">
    <property type="entry name" value="MGS"/>
    <property type="match status" value="1"/>
</dbReference>
<organism>
    <name type="scientific">Lactobacillus helveticus (strain DPC 4571)</name>
    <dbReference type="NCBI Taxonomy" id="405566"/>
    <lineage>
        <taxon>Bacteria</taxon>
        <taxon>Bacillati</taxon>
        <taxon>Bacillota</taxon>
        <taxon>Bacilli</taxon>
        <taxon>Lactobacillales</taxon>
        <taxon>Lactobacillaceae</taxon>
        <taxon>Lactobacillus</taxon>
    </lineage>
</organism>
<name>CARB_LACH4</name>
<protein>
    <recommendedName>
        <fullName evidence="1">Carbamoyl phosphate synthase large chain</fullName>
        <ecNumber evidence="1">6.3.4.16</ecNumber>
        <ecNumber evidence="1">6.3.5.5</ecNumber>
    </recommendedName>
    <alternativeName>
        <fullName evidence="1">Carbamoyl phosphate synthetase ammonia chain</fullName>
    </alternativeName>
</protein>
<evidence type="ECO:0000255" key="1">
    <source>
        <dbReference type="HAMAP-Rule" id="MF_01210"/>
    </source>
</evidence>